<gene>
    <name evidence="1" type="primary">ispD</name>
    <name type="ordered locus">Francci3_4254</name>
</gene>
<dbReference type="EC" id="2.7.7.60" evidence="1"/>
<dbReference type="EMBL" id="CP000249">
    <property type="protein sequence ID" value="ABD13600.1"/>
    <property type="molecule type" value="Genomic_DNA"/>
</dbReference>
<dbReference type="RefSeq" id="WP_011438609.1">
    <property type="nucleotide sequence ID" value="NZ_JENI01000012.1"/>
</dbReference>
<dbReference type="SMR" id="Q2J542"/>
<dbReference type="STRING" id="106370.Francci3_4254"/>
<dbReference type="KEGG" id="fra:Francci3_4254"/>
<dbReference type="eggNOG" id="COG1211">
    <property type="taxonomic scope" value="Bacteria"/>
</dbReference>
<dbReference type="HOGENOM" id="CLU_061281_1_0_11"/>
<dbReference type="OrthoDB" id="9802561at2"/>
<dbReference type="PhylomeDB" id="Q2J542"/>
<dbReference type="UniPathway" id="UPA00056">
    <property type="reaction ID" value="UER00093"/>
</dbReference>
<dbReference type="Proteomes" id="UP000001937">
    <property type="component" value="Chromosome"/>
</dbReference>
<dbReference type="GO" id="GO:0050518">
    <property type="term" value="F:2-C-methyl-D-erythritol 4-phosphate cytidylyltransferase activity"/>
    <property type="evidence" value="ECO:0007669"/>
    <property type="project" value="UniProtKB-UniRule"/>
</dbReference>
<dbReference type="GO" id="GO:0019288">
    <property type="term" value="P:isopentenyl diphosphate biosynthetic process, methylerythritol 4-phosphate pathway"/>
    <property type="evidence" value="ECO:0007669"/>
    <property type="project" value="UniProtKB-UniRule"/>
</dbReference>
<dbReference type="CDD" id="cd02516">
    <property type="entry name" value="CDP-ME_synthetase"/>
    <property type="match status" value="1"/>
</dbReference>
<dbReference type="FunFam" id="3.90.550.10:FF:000003">
    <property type="entry name" value="2-C-methyl-D-erythritol 4-phosphate cytidylyltransferase"/>
    <property type="match status" value="1"/>
</dbReference>
<dbReference type="Gene3D" id="3.90.550.10">
    <property type="entry name" value="Spore Coat Polysaccharide Biosynthesis Protein SpsA, Chain A"/>
    <property type="match status" value="1"/>
</dbReference>
<dbReference type="HAMAP" id="MF_00108">
    <property type="entry name" value="IspD"/>
    <property type="match status" value="1"/>
</dbReference>
<dbReference type="InterPro" id="IPR001228">
    <property type="entry name" value="IspD"/>
</dbReference>
<dbReference type="InterPro" id="IPR034683">
    <property type="entry name" value="IspD/TarI"/>
</dbReference>
<dbReference type="InterPro" id="IPR050088">
    <property type="entry name" value="IspD/TarI_cytidylyltransf_bact"/>
</dbReference>
<dbReference type="InterPro" id="IPR018294">
    <property type="entry name" value="ISPD_synthase_CS"/>
</dbReference>
<dbReference type="InterPro" id="IPR029044">
    <property type="entry name" value="Nucleotide-diphossugar_trans"/>
</dbReference>
<dbReference type="NCBIfam" id="TIGR00453">
    <property type="entry name" value="ispD"/>
    <property type="match status" value="1"/>
</dbReference>
<dbReference type="PANTHER" id="PTHR32125">
    <property type="entry name" value="2-C-METHYL-D-ERYTHRITOL 4-PHOSPHATE CYTIDYLYLTRANSFERASE, CHLOROPLASTIC"/>
    <property type="match status" value="1"/>
</dbReference>
<dbReference type="PANTHER" id="PTHR32125:SF4">
    <property type="entry name" value="2-C-METHYL-D-ERYTHRITOL 4-PHOSPHATE CYTIDYLYLTRANSFERASE, CHLOROPLASTIC"/>
    <property type="match status" value="1"/>
</dbReference>
<dbReference type="Pfam" id="PF01128">
    <property type="entry name" value="IspD"/>
    <property type="match status" value="1"/>
</dbReference>
<dbReference type="SUPFAM" id="SSF53448">
    <property type="entry name" value="Nucleotide-diphospho-sugar transferases"/>
    <property type="match status" value="1"/>
</dbReference>
<dbReference type="PROSITE" id="PS01295">
    <property type="entry name" value="ISPD"/>
    <property type="match status" value="1"/>
</dbReference>
<proteinExistence type="inferred from homology"/>
<feature type="chain" id="PRO_0000237790" description="2-C-methyl-D-erythritol 4-phosphate cytidylyltransferase">
    <location>
        <begin position="1"/>
        <end position="266"/>
    </location>
</feature>
<feature type="region of interest" description="Disordered" evidence="2">
    <location>
        <begin position="234"/>
        <end position="266"/>
    </location>
</feature>
<feature type="compositionally biased region" description="Basic and acidic residues" evidence="2">
    <location>
        <begin position="234"/>
        <end position="251"/>
    </location>
</feature>
<feature type="site" description="Transition state stabilizer" evidence="1">
    <location>
        <position position="26"/>
    </location>
</feature>
<feature type="site" description="Transition state stabilizer" evidence="1">
    <location>
        <position position="33"/>
    </location>
</feature>
<feature type="site" description="Positions MEP for the nucleophilic attack" evidence="1">
    <location>
        <position position="161"/>
    </location>
</feature>
<feature type="site" description="Positions MEP for the nucleophilic attack" evidence="1">
    <location>
        <position position="214"/>
    </location>
</feature>
<accession>Q2J542</accession>
<protein>
    <recommendedName>
        <fullName evidence="1">2-C-methyl-D-erythritol 4-phosphate cytidylyltransferase</fullName>
        <ecNumber evidence="1">2.7.7.60</ecNumber>
    </recommendedName>
    <alternativeName>
        <fullName evidence="1">4-diphosphocytidyl-2C-methyl-D-erythritol synthase</fullName>
    </alternativeName>
    <alternativeName>
        <fullName evidence="1">MEP cytidylyltransferase</fullName>
        <shortName evidence="1">MCT</shortName>
    </alternativeName>
</protein>
<evidence type="ECO:0000255" key="1">
    <source>
        <dbReference type="HAMAP-Rule" id="MF_00108"/>
    </source>
</evidence>
<evidence type="ECO:0000256" key="2">
    <source>
        <dbReference type="SAM" id="MobiDB-lite"/>
    </source>
</evidence>
<name>ISPD_FRACC</name>
<sequence length="266" mass="27498">MGEGHRLPVASPRVAAIVPAAGRGERLGGGTPKALRALGGRPMLVRTVESLRRSRLVTQIVVAAPPTLVDAVAQLLGGDVYVIAGGAERVDSVRRALRAVDDDVSVVLVHDAARPLTPPELVDAVAAAVLDGHPAVIPVVPLADTVKEVDADGRVVRTPPRDGLRAVQTPQGFRRDVLSAAYALEDIAVTDDAGLVEALGVPVTTIPGAQEAFKVTRPADLVLAEALLARCDPADDARSAEARSAEARSEEPQFAGARSTDARSGG</sequence>
<reference key="1">
    <citation type="journal article" date="2007" name="Genome Res.">
        <title>Genome characteristics of facultatively symbiotic Frankia sp. strains reflect host range and host plant biogeography.</title>
        <authorList>
            <person name="Normand P."/>
            <person name="Lapierre P."/>
            <person name="Tisa L.S."/>
            <person name="Gogarten J.P."/>
            <person name="Alloisio N."/>
            <person name="Bagnarol E."/>
            <person name="Bassi C.A."/>
            <person name="Berry A.M."/>
            <person name="Bickhart D.M."/>
            <person name="Choisne N."/>
            <person name="Couloux A."/>
            <person name="Cournoyer B."/>
            <person name="Cruveiller S."/>
            <person name="Daubin V."/>
            <person name="Demange N."/>
            <person name="Francino M.P."/>
            <person name="Goltsman E."/>
            <person name="Huang Y."/>
            <person name="Kopp O.R."/>
            <person name="Labarre L."/>
            <person name="Lapidus A."/>
            <person name="Lavire C."/>
            <person name="Marechal J."/>
            <person name="Martinez M."/>
            <person name="Mastronunzio J.E."/>
            <person name="Mullin B.C."/>
            <person name="Niemann J."/>
            <person name="Pujic P."/>
            <person name="Rawnsley T."/>
            <person name="Rouy Z."/>
            <person name="Schenowitz C."/>
            <person name="Sellstedt A."/>
            <person name="Tavares F."/>
            <person name="Tomkins J.P."/>
            <person name="Vallenet D."/>
            <person name="Valverde C."/>
            <person name="Wall L.G."/>
            <person name="Wang Y."/>
            <person name="Medigue C."/>
            <person name="Benson D.R."/>
        </authorList>
    </citation>
    <scope>NUCLEOTIDE SEQUENCE [LARGE SCALE GENOMIC DNA]</scope>
    <source>
        <strain>DSM 45818 / CECT 9043 / HFP020203 / CcI3</strain>
    </source>
</reference>
<keyword id="KW-0414">Isoprene biosynthesis</keyword>
<keyword id="KW-0548">Nucleotidyltransferase</keyword>
<keyword id="KW-1185">Reference proteome</keyword>
<keyword id="KW-0808">Transferase</keyword>
<organism>
    <name type="scientific">Frankia casuarinae (strain DSM 45818 / CECT 9043 / HFP020203 / CcI3)</name>
    <dbReference type="NCBI Taxonomy" id="106370"/>
    <lineage>
        <taxon>Bacteria</taxon>
        <taxon>Bacillati</taxon>
        <taxon>Actinomycetota</taxon>
        <taxon>Actinomycetes</taxon>
        <taxon>Frankiales</taxon>
        <taxon>Frankiaceae</taxon>
        <taxon>Frankia</taxon>
    </lineage>
</organism>
<comment type="function">
    <text evidence="1">Catalyzes the formation of 4-diphosphocytidyl-2-C-methyl-D-erythritol from CTP and 2-C-methyl-D-erythritol 4-phosphate (MEP).</text>
</comment>
<comment type="catalytic activity">
    <reaction evidence="1">
        <text>2-C-methyl-D-erythritol 4-phosphate + CTP + H(+) = 4-CDP-2-C-methyl-D-erythritol + diphosphate</text>
        <dbReference type="Rhea" id="RHEA:13429"/>
        <dbReference type="ChEBI" id="CHEBI:15378"/>
        <dbReference type="ChEBI" id="CHEBI:33019"/>
        <dbReference type="ChEBI" id="CHEBI:37563"/>
        <dbReference type="ChEBI" id="CHEBI:57823"/>
        <dbReference type="ChEBI" id="CHEBI:58262"/>
        <dbReference type="EC" id="2.7.7.60"/>
    </reaction>
</comment>
<comment type="pathway">
    <text evidence="1">Isoprenoid biosynthesis; isopentenyl diphosphate biosynthesis via DXP pathway; isopentenyl diphosphate from 1-deoxy-D-xylulose 5-phosphate: step 2/6.</text>
</comment>
<comment type="similarity">
    <text evidence="1">Belongs to the IspD/TarI cytidylyltransferase family. IspD subfamily.</text>
</comment>